<proteinExistence type="evidence at transcript level"/>
<reference key="1">
    <citation type="journal article" date="1988" name="Eur. J. Biochem.">
        <title>Primary structures and catalytic properties of isoenzymes encoded by the two 4-coumarate:CoA ligase genes in parsley.</title>
        <authorList>
            <person name="Lozoya E."/>
            <person name="Hoffmann H."/>
            <person name="Douglas C."/>
            <person name="Schulz W."/>
            <person name="Scheel D."/>
            <person name="Hahlbrock K."/>
        </authorList>
    </citation>
    <scope>NUCLEOTIDE SEQUENCE [MRNA]</scope>
</reference>
<reference key="2">
    <citation type="journal article" date="1987" name="EMBO J.">
        <title>Structure and elicitor or U.V.-light-stimulated expression of two 4-coumarate:CoA ligase genes in parsley.</title>
        <authorList>
            <person name="Douglas C."/>
            <person name="Hoffmann H."/>
            <person name="Schulz W."/>
            <person name="Hahlbrock K."/>
        </authorList>
    </citation>
    <scope>NUCLEOTIDE SEQUENCE [GENOMIC DNA] OF 1-8</scope>
</reference>
<keyword id="KW-0067">ATP-binding</keyword>
<keyword id="KW-0436">Ligase</keyword>
<keyword id="KW-0460">Magnesium</keyword>
<keyword id="KW-0547">Nucleotide-binding</keyword>
<keyword id="KW-0587">Phenylpropanoid metabolism</keyword>
<accession>P14913</accession>
<name>4CL2_PETCR</name>
<gene>
    <name type="primary">4CL2</name>
    <name type="synonym">4CL-2</name>
</gene>
<protein>
    <recommendedName>
        <fullName>4-coumarate--CoA ligase 2</fullName>
        <shortName>4CL 2</shortName>
        <ecNumber evidence="1">6.2.1.12</ecNumber>
    </recommendedName>
    <alternativeName>
        <fullName>4-coumaroyl-CoA synthase 2</fullName>
    </alternativeName>
</protein>
<feature type="chain" id="PRO_0000193034" description="4-coumarate--CoA ligase 2">
    <location>
        <begin position="1"/>
        <end position="544"/>
    </location>
</feature>
<feature type="region of interest" description="SBD1" evidence="2">
    <location>
        <begin position="263"/>
        <end position="332"/>
    </location>
</feature>
<feature type="region of interest" description="SBD2" evidence="2">
    <location>
        <begin position="333"/>
        <end position="400"/>
    </location>
</feature>
<feature type="binding site" evidence="1">
    <location>
        <position position="190"/>
    </location>
    <ligand>
        <name>ATP</name>
        <dbReference type="ChEBI" id="CHEBI:30616"/>
    </ligand>
</feature>
<feature type="binding site" evidence="1">
    <location>
        <position position="191"/>
    </location>
    <ligand>
        <name>ATP</name>
        <dbReference type="ChEBI" id="CHEBI:30616"/>
    </ligand>
</feature>
<feature type="binding site" evidence="1">
    <location>
        <position position="192"/>
    </location>
    <ligand>
        <name>ATP</name>
        <dbReference type="ChEBI" id="CHEBI:30616"/>
    </ligand>
</feature>
<feature type="binding site" evidence="1">
    <location>
        <position position="193"/>
    </location>
    <ligand>
        <name>ATP</name>
        <dbReference type="ChEBI" id="CHEBI:30616"/>
    </ligand>
</feature>
<feature type="binding site" evidence="1">
    <location>
        <position position="194"/>
    </location>
    <ligand>
        <name>ATP</name>
        <dbReference type="ChEBI" id="CHEBI:30616"/>
    </ligand>
</feature>
<feature type="binding site" evidence="1">
    <location>
        <position position="198"/>
    </location>
    <ligand>
        <name>ATP</name>
        <dbReference type="ChEBI" id="CHEBI:30616"/>
    </ligand>
</feature>
<feature type="binding site" evidence="1">
    <location>
        <position position="240"/>
    </location>
    <ligand>
        <name>(E)-4-coumaroyl-AMP</name>
        <dbReference type="ChEBI" id="CHEBI:192348"/>
    </ligand>
</feature>
<feature type="binding site" evidence="1">
    <location>
        <position position="261"/>
    </location>
    <ligand>
        <name>CoA</name>
        <dbReference type="ChEBI" id="CHEBI:57287"/>
    </ligand>
</feature>
<feature type="binding site" evidence="1">
    <location>
        <position position="310"/>
    </location>
    <ligand>
        <name>(E)-4-coumaroyl-AMP</name>
        <dbReference type="ChEBI" id="CHEBI:192348"/>
    </ligand>
</feature>
<feature type="binding site" evidence="1">
    <location>
        <position position="332"/>
    </location>
    <ligand>
        <name>(E)-4-coumaroyl-AMP</name>
        <dbReference type="ChEBI" id="CHEBI:192348"/>
    </ligand>
</feature>
<feature type="binding site" evidence="1">
    <location>
        <position position="332"/>
    </location>
    <ligand>
        <name>ATP</name>
        <dbReference type="ChEBI" id="CHEBI:30616"/>
    </ligand>
</feature>
<feature type="binding site" evidence="1">
    <location>
        <position position="333"/>
    </location>
    <ligand>
        <name>(E)-4-coumaroyl-AMP</name>
        <dbReference type="ChEBI" id="CHEBI:192348"/>
    </ligand>
</feature>
<feature type="binding site" evidence="1">
    <location>
        <position position="333"/>
    </location>
    <ligand>
        <name>ATP</name>
        <dbReference type="ChEBI" id="CHEBI:30616"/>
    </ligand>
</feature>
<feature type="binding site" evidence="1">
    <location>
        <position position="337"/>
    </location>
    <ligand>
        <name>(E)-4-coumaroyl-AMP</name>
        <dbReference type="ChEBI" id="CHEBI:192348"/>
    </ligand>
</feature>
<feature type="binding site" evidence="1">
    <location>
        <position position="337"/>
    </location>
    <ligand>
        <name>ATP</name>
        <dbReference type="ChEBI" id="CHEBI:30616"/>
    </ligand>
</feature>
<feature type="binding site" evidence="1">
    <location>
        <position position="345"/>
    </location>
    <ligand>
        <name>(E)-4-coumaroyl-AMP</name>
        <dbReference type="ChEBI" id="CHEBI:192348"/>
    </ligand>
</feature>
<feature type="binding site" evidence="1">
    <location>
        <position position="421"/>
    </location>
    <ligand>
        <name>ATP</name>
        <dbReference type="ChEBI" id="CHEBI:30616"/>
    </ligand>
</feature>
<feature type="binding site" evidence="1">
    <location>
        <position position="436"/>
    </location>
    <ligand>
        <name>ATP</name>
        <dbReference type="ChEBI" id="CHEBI:30616"/>
    </ligand>
</feature>
<feature type="binding site" evidence="1">
    <location>
        <position position="438"/>
    </location>
    <ligand>
        <name>(E)-4-coumaroyl-AMP</name>
        <dbReference type="ChEBI" id="CHEBI:192348"/>
    </ligand>
</feature>
<feature type="binding site" evidence="1">
    <location>
        <position position="442"/>
    </location>
    <ligand>
        <name>(E)-4-coumaroyl-AMP</name>
        <dbReference type="ChEBI" id="CHEBI:192348"/>
    </ligand>
</feature>
<feature type="binding site" evidence="1">
    <location>
        <position position="444"/>
    </location>
    <ligand>
        <name>CoA</name>
        <dbReference type="ChEBI" id="CHEBI:57287"/>
    </ligand>
</feature>
<feature type="binding site" evidence="1">
    <location>
        <position position="445"/>
    </location>
    <ligand>
        <name>CoA</name>
        <dbReference type="ChEBI" id="CHEBI:57287"/>
    </ligand>
</feature>
<feature type="binding site" evidence="1">
    <location>
        <position position="527"/>
    </location>
    <ligand>
        <name>ATP</name>
        <dbReference type="ChEBI" id="CHEBI:30616"/>
    </ligand>
</feature>
<comment type="function">
    <text evidence="1">Carboxylate--CoA ligase that may use 4-coumarate as substrate. Follows a two-step reaction mechanism, wherein the carboxylate substrate first undergoes adenylation by ATP, followed by a thioesterification in the presence of CoA to yield the final CoA thioester.</text>
</comment>
<comment type="catalytic activity">
    <reaction evidence="1">
        <text>(E)-4-coumarate + ATP + CoA = (E)-4-coumaroyl-CoA + AMP + diphosphate</text>
        <dbReference type="Rhea" id="RHEA:19641"/>
        <dbReference type="ChEBI" id="CHEBI:12876"/>
        <dbReference type="ChEBI" id="CHEBI:30616"/>
        <dbReference type="ChEBI" id="CHEBI:33019"/>
        <dbReference type="ChEBI" id="CHEBI:57287"/>
        <dbReference type="ChEBI" id="CHEBI:85008"/>
        <dbReference type="ChEBI" id="CHEBI:456215"/>
        <dbReference type="EC" id="6.2.1.12"/>
    </reaction>
    <physiologicalReaction direction="left-to-right" evidence="1">
        <dbReference type="Rhea" id="RHEA:19642"/>
    </physiologicalReaction>
</comment>
<comment type="catalytic activity">
    <reaction evidence="1">
        <text>(E)-4-coumarate + ATP + H(+) = (E)-4-coumaroyl-AMP + diphosphate</text>
        <dbReference type="Rhea" id="RHEA:72419"/>
        <dbReference type="ChEBI" id="CHEBI:12876"/>
        <dbReference type="ChEBI" id="CHEBI:15378"/>
        <dbReference type="ChEBI" id="CHEBI:30616"/>
        <dbReference type="ChEBI" id="CHEBI:33019"/>
        <dbReference type="ChEBI" id="CHEBI:192348"/>
    </reaction>
    <physiologicalReaction direction="left-to-right" evidence="1">
        <dbReference type="Rhea" id="RHEA:72420"/>
    </physiologicalReaction>
</comment>
<comment type="catalytic activity">
    <reaction evidence="1">
        <text>(E)-4-coumaroyl-AMP + CoA = (E)-4-coumaroyl-CoA + AMP + H(+)</text>
        <dbReference type="Rhea" id="RHEA:72423"/>
        <dbReference type="ChEBI" id="CHEBI:15378"/>
        <dbReference type="ChEBI" id="CHEBI:57287"/>
        <dbReference type="ChEBI" id="CHEBI:85008"/>
        <dbReference type="ChEBI" id="CHEBI:192348"/>
        <dbReference type="ChEBI" id="CHEBI:456215"/>
    </reaction>
    <physiologicalReaction direction="left-to-right" evidence="1">
        <dbReference type="Rhea" id="RHEA:72424"/>
    </physiologicalReaction>
</comment>
<comment type="cofactor">
    <cofactor evidence="1">
        <name>Mg(2+)</name>
        <dbReference type="ChEBI" id="CHEBI:18420"/>
    </cofactor>
</comment>
<comment type="pathway">
    <text evidence="2">Phytoalexin biosynthesis; 3,4',5-trihydroxystilbene biosynthesis; 3,4',5-trihydroxystilbene from trans-4-coumarate: step 1/2.</text>
</comment>
<comment type="induction">
    <text>By fungal elicitor and UV irradiation.</text>
</comment>
<comment type="domain">
    <text evidence="2">Both substrate-binding domains (SBD1 and SBD2) are involved in the substrate recognition, and are sufficient to confer the substrate specificity.</text>
</comment>
<comment type="similarity">
    <text evidence="3">Belongs to the ATP-dependent AMP-binding enzyme family.</text>
</comment>
<dbReference type="EC" id="6.2.1.12" evidence="1"/>
<dbReference type="EMBL" id="X13325">
    <property type="protein sequence ID" value="CAA31697.1"/>
    <property type="molecule type" value="mRNA"/>
</dbReference>
<dbReference type="EMBL" id="X05351">
    <property type="protein sequence ID" value="CAA28960.1"/>
    <property type="molecule type" value="Genomic_DNA"/>
</dbReference>
<dbReference type="PIR" id="S15695">
    <property type="entry name" value="S15695"/>
</dbReference>
<dbReference type="SMR" id="P14913"/>
<dbReference type="BioCyc" id="MetaCyc:MONOMER-18289"/>
<dbReference type="BRENDA" id="6.2.1.12">
    <property type="organism ID" value="4694"/>
</dbReference>
<dbReference type="UniPathway" id="UPA00372">
    <property type="reaction ID" value="UER00547"/>
</dbReference>
<dbReference type="GO" id="GO:0016207">
    <property type="term" value="F:4-coumarate-CoA ligase activity"/>
    <property type="evidence" value="ECO:0007669"/>
    <property type="project" value="UniProtKB-EC"/>
</dbReference>
<dbReference type="GO" id="GO:0005524">
    <property type="term" value="F:ATP binding"/>
    <property type="evidence" value="ECO:0007669"/>
    <property type="project" value="UniProtKB-KW"/>
</dbReference>
<dbReference type="GO" id="GO:0009698">
    <property type="term" value="P:phenylpropanoid metabolic process"/>
    <property type="evidence" value="ECO:0007669"/>
    <property type="project" value="UniProtKB-KW"/>
</dbReference>
<dbReference type="CDD" id="cd05904">
    <property type="entry name" value="4CL"/>
    <property type="match status" value="1"/>
</dbReference>
<dbReference type="FunFam" id="3.30.300.30:FF:000007">
    <property type="entry name" value="4-coumarate--CoA ligase 2"/>
    <property type="match status" value="1"/>
</dbReference>
<dbReference type="FunFam" id="3.40.50.12780:FF:000003">
    <property type="entry name" value="Long-chain-fatty-acid--CoA ligase FadD"/>
    <property type="match status" value="1"/>
</dbReference>
<dbReference type="Gene3D" id="3.30.300.30">
    <property type="match status" value="1"/>
</dbReference>
<dbReference type="Gene3D" id="3.40.50.12780">
    <property type="entry name" value="N-terminal domain of ligase-like"/>
    <property type="match status" value="1"/>
</dbReference>
<dbReference type="InterPro" id="IPR025110">
    <property type="entry name" value="AMP-bd_C"/>
</dbReference>
<dbReference type="InterPro" id="IPR045851">
    <property type="entry name" value="AMP-bd_C_sf"/>
</dbReference>
<dbReference type="InterPro" id="IPR020845">
    <property type="entry name" value="AMP-binding_CS"/>
</dbReference>
<dbReference type="InterPro" id="IPR000873">
    <property type="entry name" value="AMP-dep_synth/lig_dom"/>
</dbReference>
<dbReference type="InterPro" id="IPR042099">
    <property type="entry name" value="ANL_N_sf"/>
</dbReference>
<dbReference type="PANTHER" id="PTHR24096:SF406">
    <property type="entry name" value="4-COUMARATE--COA LIGASE 2"/>
    <property type="match status" value="1"/>
</dbReference>
<dbReference type="PANTHER" id="PTHR24096">
    <property type="entry name" value="LONG-CHAIN-FATTY-ACID--COA LIGASE"/>
    <property type="match status" value="1"/>
</dbReference>
<dbReference type="Pfam" id="PF00501">
    <property type="entry name" value="AMP-binding"/>
    <property type="match status" value="1"/>
</dbReference>
<dbReference type="Pfam" id="PF13193">
    <property type="entry name" value="AMP-binding_C"/>
    <property type="match status" value="1"/>
</dbReference>
<dbReference type="SUPFAM" id="SSF56801">
    <property type="entry name" value="Acetyl-CoA synthetase-like"/>
    <property type="match status" value="1"/>
</dbReference>
<dbReference type="PROSITE" id="PS00455">
    <property type="entry name" value="AMP_BINDING"/>
    <property type="match status" value="1"/>
</dbReference>
<organism>
    <name type="scientific">Petroselinum crispum</name>
    <name type="common">Parsley</name>
    <name type="synonym">Petroselinum hortense</name>
    <dbReference type="NCBI Taxonomy" id="4043"/>
    <lineage>
        <taxon>Eukaryota</taxon>
        <taxon>Viridiplantae</taxon>
        <taxon>Streptophyta</taxon>
        <taxon>Embryophyta</taxon>
        <taxon>Tracheophyta</taxon>
        <taxon>Spermatophyta</taxon>
        <taxon>Magnoliopsida</taxon>
        <taxon>eudicotyledons</taxon>
        <taxon>Gunneridae</taxon>
        <taxon>Pentapetalae</taxon>
        <taxon>asterids</taxon>
        <taxon>campanulids</taxon>
        <taxon>Apiales</taxon>
        <taxon>Apiaceae</taxon>
        <taxon>Apioideae</taxon>
        <taxon>apioid superclade</taxon>
        <taxon>Apieae</taxon>
        <taxon>Petroselinum</taxon>
    </lineage>
</organism>
<sequence>MGDCVAPKEDLIFRSKLPDIYIPKHLPLHTYCFENISKVGDKSCLINGATGETFTYSQVELLSRKVASGLNKLGIQQGDTIMLLLPNSPEYFFAFLGASYRGAISTMANPFFTSAEVIKQLKASLAKLIITQACYVDKVKDYAAEKNIQIICIDDAPQDCLHFSKLMEADESEMPEVVIDSDDVVALPYSSGTTGLPKGVMLTHKGLVTSVAQQVDGDNPNLYMHSEDVMICILPLFHIYSLNAVLCCGLRAGVTILIMQKFDIVPFLELIQKYKVTIGPFVPPIVLAIAKSPVVDKYDLSSVRTVMSGAAPLGKELEDAVRAKFPNAKLGQGYGMTEAGPVLAMCLAFAKEPYEIKSGACGTVVRNAEMKIVDPETNASLPRNQRGEICIRGDQIMKGYLNDPESTRTTIDEEGWLHTGDIGFIDDDDELFIVDRLKEIIKYKGFQVAPAELEALLLTHPTISDAAVVPMIDEKAGEVPVAFVVRTNGFTTTEEEIKQFVSKQVVFYKRIFRVFFVDAIPKSPSGKILRKDLRAKIASGDLPK</sequence>
<evidence type="ECO:0000250" key="1">
    <source>
        <dbReference type="UniProtKB" id="O24146"/>
    </source>
</evidence>
<evidence type="ECO:0000250" key="2">
    <source>
        <dbReference type="UniProtKB" id="Q42524"/>
    </source>
</evidence>
<evidence type="ECO:0000305" key="3"/>